<name>RS20_AERHH</name>
<sequence length="87" mass="9530">MANIKSAKKRALQSEKRRQHNASRRSMTRTYLKKVIAAIASGDKAAATAAFAVAQPIMDRMATKGLIHKNKAARHKSRLSAQIKAMA</sequence>
<gene>
    <name evidence="1" type="primary">rpsT</name>
    <name type="ordered locus">AHA_0679</name>
</gene>
<protein>
    <recommendedName>
        <fullName evidence="1">Small ribosomal subunit protein bS20</fullName>
    </recommendedName>
    <alternativeName>
        <fullName evidence="3">30S ribosomal protein S20</fullName>
    </alternativeName>
</protein>
<feature type="chain" id="PRO_1000014541" description="Small ribosomal subunit protein bS20">
    <location>
        <begin position="1"/>
        <end position="87"/>
    </location>
</feature>
<feature type="region of interest" description="Disordered" evidence="2">
    <location>
        <begin position="1"/>
        <end position="27"/>
    </location>
</feature>
<organism>
    <name type="scientific">Aeromonas hydrophila subsp. hydrophila (strain ATCC 7966 / DSM 30187 / BCRC 13018 / CCUG 14551 / JCM 1027 / KCTC 2358 / NCIMB 9240 / NCTC 8049)</name>
    <dbReference type="NCBI Taxonomy" id="380703"/>
    <lineage>
        <taxon>Bacteria</taxon>
        <taxon>Pseudomonadati</taxon>
        <taxon>Pseudomonadota</taxon>
        <taxon>Gammaproteobacteria</taxon>
        <taxon>Aeromonadales</taxon>
        <taxon>Aeromonadaceae</taxon>
        <taxon>Aeromonas</taxon>
    </lineage>
</organism>
<dbReference type="EMBL" id="CP000462">
    <property type="protein sequence ID" value="ABK36443.1"/>
    <property type="molecule type" value="Genomic_DNA"/>
</dbReference>
<dbReference type="RefSeq" id="WP_005308808.1">
    <property type="nucleotide sequence ID" value="NC_008570.1"/>
</dbReference>
<dbReference type="RefSeq" id="YP_855221.1">
    <property type="nucleotide sequence ID" value="NC_008570.1"/>
</dbReference>
<dbReference type="SMR" id="A0KG36"/>
<dbReference type="STRING" id="380703.AHA_0679"/>
<dbReference type="EnsemblBacteria" id="ABK36443">
    <property type="protein sequence ID" value="ABK36443"/>
    <property type="gene ID" value="AHA_0679"/>
</dbReference>
<dbReference type="GeneID" id="97859196"/>
<dbReference type="KEGG" id="aha:AHA_0679"/>
<dbReference type="PATRIC" id="fig|380703.7.peg.681"/>
<dbReference type="eggNOG" id="COG0268">
    <property type="taxonomic scope" value="Bacteria"/>
</dbReference>
<dbReference type="HOGENOM" id="CLU_160655_4_0_6"/>
<dbReference type="OrthoDB" id="9807974at2"/>
<dbReference type="PRO" id="PR:A0KG36"/>
<dbReference type="Proteomes" id="UP000000756">
    <property type="component" value="Chromosome"/>
</dbReference>
<dbReference type="GO" id="GO:0005829">
    <property type="term" value="C:cytosol"/>
    <property type="evidence" value="ECO:0007669"/>
    <property type="project" value="TreeGrafter"/>
</dbReference>
<dbReference type="GO" id="GO:0015935">
    <property type="term" value="C:small ribosomal subunit"/>
    <property type="evidence" value="ECO:0007669"/>
    <property type="project" value="TreeGrafter"/>
</dbReference>
<dbReference type="GO" id="GO:0070181">
    <property type="term" value="F:small ribosomal subunit rRNA binding"/>
    <property type="evidence" value="ECO:0007669"/>
    <property type="project" value="TreeGrafter"/>
</dbReference>
<dbReference type="GO" id="GO:0003735">
    <property type="term" value="F:structural constituent of ribosome"/>
    <property type="evidence" value="ECO:0007669"/>
    <property type="project" value="InterPro"/>
</dbReference>
<dbReference type="GO" id="GO:0006412">
    <property type="term" value="P:translation"/>
    <property type="evidence" value="ECO:0007669"/>
    <property type="project" value="UniProtKB-UniRule"/>
</dbReference>
<dbReference type="FunFam" id="1.20.58.110:FF:000001">
    <property type="entry name" value="30S ribosomal protein S20"/>
    <property type="match status" value="1"/>
</dbReference>
<dbReference type="Gene3D" id="1.20.58.110">
    <property type="entry name" value="Ribosomal protein S20"/>
    <property type="match status" value="1"/>
</dbReference>
<dbReference type="HAMAP" id="MF_00500">
    <property type="entry name" value="Ribosomal_bS20"/>
    <property type="match status" value="1"/>
</dbReference>
<dbReference type="InterPro" id="IPR002583">
    <property type="entry name" value="Ribosomal_bS20"/>
</dbReference>
<dbReference type="InterPro" id="IPR036510">
    <property type="entry name" value="Ribosomal_bS20_sf"/>
</dbReference>
<dbReference type="NCBIfam" id="TIGR00029">
    <property type="entry name" value="S20"/>
    <property type="match status" value="1"/>
</dbReference>
<dbReference type="PANTHER" id="PTHR33398">
    <property type="entry name" value="30S RIBOSOMAL PROTEIN S20"/>
    <property type="match status" value="1"/>
</dbReference>
<dbReference type="PANTHER" id="PTHR33398:SF1">
    <property type="entry name" value="SMALL RIBOSOMAL SUBUNIT PROTEIN BS20C"/>
    <property type="match status" value="1"/>
</dbReference>
<dbReference type="Pfam" id="PF01649">
    <property type="entry name" value="Ribosomal_S20p"/>
    <property type="match status" value="1"/>
</dbReference>
<dbReference type="SUPFAM" id="SSF46992">
    <property type="entry name" value="Ribosomal protein S20"/>
    <property type="match status" value="1"/>
</dbReference>
<reference key="1">
    <citation type="journal article" date="2006" name="J. Bacteriol.">
        <title>Genome sequence of Aeromonas hydrophila ATCC 7966T: jack of all trades.</title>
        <authorList>
            <person name="Seshadri R."/>
            <person name="Joseph S.W."/>
            <person name="Chopra A.K."/>
            <person name="Sha J."/>
            <person name="Shaw J."/>
            <person name="Graf J."/>
            <person name="Haft D.H."/>
            <person name="Wu M."/>
            <person name="Ren Q."/>
            <person name="Rosovitz M.J."/>
            <person name="Madupu R."/>
            <person name="Tallon L."/>
            <person name="Kim M."/>
            <person name="Jin S."/>
            <person name="Vuong H."/>
            <person name="Stine O.C."/>
            <person name="Ali A."/>
            <person name="Horneman A.J."/>
            <person name="Heidelberg J.F."/>
        </authorList>
    </citation>
    <scope>NUCLEOTIDE SEQUENCE [LARGE SCALE GENOMIC DNA]</scope>
    <source>
        <strain>ATCC 7966 / DSM 30187 / BCRC 13018 / CCUG 14551 / JCM 1027 / KCTC 2358 / NCIMB 9240 / NCTC 8049</strain>
    </source>
</reference>
<proteinExistence type="inferred from homology"/>
<accession>A0KG36</accession>
<comment type="function">
    <text evidence="1">Binds directly to 16S ribosomal RNA.</text>
</comment>
<comment type="similarity">
    <text evidence="1">Belongs to the bacterial ribosomal protein bS20 family.</text>
</comment>
<evidence type="ECO:0000255" key="1">
    <source>
        <dbReference type="HAMAP-Rule" id="MF_00500"/>
    </source>
</evidence>
<evidence type="ECO:0000256" key="2">
    <source>
        <dbReference type="SAM" id="MobiDB-lite"/>
    </source>
</evidence>
<evidence type="ECO:0000305" key="3"/>
<keyword id="KW-1185">Reference proteome</keyword>
<keyword id="KW-0687">Ribonucleoprotein</keyword>
<keyword id="KW-0689">Ribosomal protein</keyword>
<keyword id="KW-0694">RNA-binding</keyword>
<keyword id="KW-0699">rRNA-binding</keyword>